<sequence length="505" mass="58905">MAVAVVTSRRMINIGNSIRRCFILNHRFFSTELTPTTITPINQDHLLRVCTILYQQQNSPDSRLVSKLSSTKFQLTHEFFLQVCNNFPLSWRPVHRFFLYSQTHHPDFTHTSTTSNKMLAIIGNSRNMDLFWELAQEIGKRGLVNDKTFRIVLKTLASARELKKCVNYFHLMNGFGYLYNVETMNRGVETLCKEKLVEEAKFVFIKLKEFIKPDEITYRTMIQGFCDVGDLIEAAKLWNLMMDEGFDVDIEAGKKIMETLLKKNQFDEASKVFYVMVSKRGGDLDGGFYRVMIDWLCKNGRIDMARKVFDEMRERGVYVDNLTWASLIYGLLVKRRVVEAYGLVEGVENPDISIYHGLIKGLVKIKRASEATEVFRKMIQRGCEPIMHTYLMLLQGHLGRRGRKGPDPLVNFDTIFVGGMIKAGKRLETTKYIERTLKRGLEVPRFDYSKFLHYYSNEEGVVMFEEMAKKLREVSLFDLADIFQRYGEKMTTRERRRDRDQLLKT</sequence>
<protein>
    <recommendedName>
        <fullName>Putative pentatricopeptide repeat-containing protein At1g26500</fullName>
    </recommendedName>
</protein>
<accession>Q9FZD4</accession>
<comment type="similarity">
    <text evidence="1">Belongs to the PPR family. P subfamily.</text>
</comment>
<comment type="online information" name="Pentatricopeptide repeat proteins">
    <link uri="https://ppr.plantenergy.uwa.edu.au"/>
</comment>
<name>PPR59_ARATH</name>
<gene>
    <name type="ordered locus">At1g26500</name>
    <name type="ORF">T1K7.14</name>
</gene>
<dbReference type="EMBL" id="AC013427">
    <property type="protein sequence ID" value="AAF98569.1"/>
    <property type="molecule type" value="Genomic_DNA"/>
</dbReference>
<dbReference type="EMBL" id="CP002684">
    <property type="protein sequence ID" value="AEE30697.1"/>
    <property type="molecule type" value="Genomic_DNA"/>
</dbReference>
<dbReference type="PIR" id="G86391">
    <property type="entry name" value="G86391"/>
</dbReference>
<dbReference type="RefSeq" id="NP_173972.1">
    <property type="nucleotide sequence ID" value="NM_102412.1"/>
</dbReference>
<dbReference type="SMR" id="Q9FZD4"/>
<dbReference type="FunCoup" id="Q9FZD4">
    <property type="interactions" value="1"/>
</dbReference>
<dbReference type="STRING" id="3702.Q9FZD4"/>
<dbReference type="PaxDb" id="3702-AT1G26500.1"/>
<dbReference type="EnsemblPlants" id="AT1G26500.1">
    <property type="protein sequence ID" value="AT1G26500.1"/>
    <property type="gene ID" value="AT1G26500"/>
</dbReference>
<dbReference type="GeneID" id="839190"/>
<dbReference type="Gramene" id="AT1G26500.1">
    <property type="protein sequence ID" value="AT1G26500.1"/>
    <property type="gene ID" value="AT1G26500"/>
</dbReference>
<dbReference type="KEGG" id="ath:AT1G26500"/>
<dbReference type="Araport" id="AT1G26500"/>
<dbReference type="TAIR" id="AT1G26500"/>
<dbReference type="eggNOG" id="KOG4197">
    <property type="taxonomic scope" value="Eukaryota"/>
</dbReference>
<dbReference type="HOGENOM" id="CLU_002706_49_20_1"/>
<dbReference type="InParanoid" id="Q9FZD4"/>
<dbReference type="OMA" id="EFFHLMN"/>
<dbReference type="PhylomeDB" id="Q9FZD4"/>
<dbReference type="PRO" id="PR:Q9FZD4"/>
<dbReference type="Proteomes" id="UP000006548">
    <property type="component" value="Chromosome 1"/>
</dbReference>
<dbReference type="ExpressionAtlas" id="Q9FZD4">
    <property type="expression patterns" value="baseline and differential"/>
</dbReference>
<dbReference type="Gene3D" id="1.25.40.10">
    <property type="entry name" value="Tetratricopeptide repeat domain"/>
    <property type="match status" value="3"/>
</dbReference>
<dbReference type="InterPro" id="IPR002885">
    <property type="entry name" value="Pentatricopeptide_rpt"/>
</dbReference>
<dbReference type="InterPro" id="IPR050667">
    <property type="entry name" value="PPR-containing_protein"/>
</dbReference>
<dbReference type="InterPro" id="IPR011990">
    <property type="entry name" value="TPR-like_helical_dom_sf"/>
</dbReference>
<dbReference type="NCBIfam" id="TIGR00756">
    <property type="entry name" value="PPR"/>
    <property type="match status" value="3"/>
</dbReference>
<dbReference type="PANTHER" id="PTHR47939">
    <property type="entry name" value="MEMBRANE-ASSOCIATED SALT-INDUCIBLE PROTEIN-LIKE"/>
    <property type="match status" value="1"/>
</dbReference>
<dbReference type="PANTHER" id="PTHR47939:SF12">
    <property type="entry name" value="PENTACOTRIPEPTIDE-REPEAT REGION OF PRORP DOMAIN-CONTAINING PROTEIN"/>
    <property type="match status" value="1"/>
</dbReference>
<dbReference type="Pfam" id="PF12854">
    <property type="entry name" value="PPR_1"/>
    <property type="match status" value="1"/>
</dbReference>
<dbReference type="Pfam" id="PF13041">
    <property type="entry name" value="PPR_2"/>
    <property type="match status" value="2"/>
</dbReference>
<dbReference type="PROSITE" id="PS51375">
    <property type="entry name" value="PPR"/>
    <property type="match status" value="7"/>
</dbReference>
<reference key="1">
    <citation type="journal article" date="2000" name="Nature">
        <title>Sequence and analysis of chromosome 1 of the plant Arabidopsis thaliana.</title>
        <authorList>
            <person name="Theologis A."/>
            <person name="Ecker J.R."/>
            <person name="Palm C.J."/>
            <person name="Federspiel N.A."/>
            <person name="Kaul S."/>
            <person name="White O."/>
            <person name="Alonso J."/>
            <person name="Altafi H."/>
            <person name="Araujo R."/>
            <person name="Bowman C.L."/>
            <person name="Brooks S.Y."/>
            <person name="Buehler E."/>
            <person name="Chan A."/>
            <person name="Chao Q."/>
            <person name="Chen H."/>
            <person name="Cheuk R.F."/>
            <person name="Chin C.W."/>
            <person name="Chung M.K."/>
            <person name="Conn L."/>
            <person name="Conway A.B."/>
            <person name="Conway A.R."/>
            <person name="Creasy T.H."/>
            <person name="Dewar K."/>
            <person name="Dunn P."/>
            <person name="Etgu P."/>
            <person name="Feldblyum T.V."/>
            <person name="Feng J.-D."/>
            <person name="Fong B."/>
            <person name="Fujii C.Y."/>
            <person name="Gill J.E."/>
            <person name="Goldsmith A.D."/>
            <person name="Haas B."/>
            <person name="Hansen N.F."/>
            <person name="Hughes B."/>
            <person name="Huizar L."/>
            <person name="Hunter J.L."/>
            <person name="Jenkins J."/>
            <person name="Johnson-Hopson C."/>
            <person name="Khan S."/>
            <person name="Khaykin E."/>
            <person name="Kim C.J."/>
            <person name="Koo H.L."/>
            <person name="Kremenetskaia I."/>
            <person name="Kurtz D.B."/>
            <person name="Kwan A."/>
            <person name="Lam B."/>
            <person name="Langin-Hooper S."/>
            <person name="Lee A."/>
            <person name="Lee J.M."/>
            <person name="Lenz C.A."/>
            <person name="Li J.H."/>
            <person name="Li Y.-P."/>
            <person name="Lin X."/>
            <person name="Liu S.X."/>
            <person name="Liu Z.A."/>
            <person name="Luros J.S."/>
            <person name="Maiti R."/>
            <person name="Marziali A."/>
            <person name="Militscher J."/>
            <person name="Miranda M."/>
            <person name="Nguyen M."/>
            <person name="Nierman W.C."/>
            <person name="Osborne B.I."/>
            <person name="Pai G."/>
            <person name="Peterson J."/>
            <person name="Pham P.K."/>
            <person name="Rizzo M."/>
            <person name="Rooney T."/>
            <person name="Rowley D."/>
            <person name="Sakano H."/>
            <person name="Salzberg S.L."/>
            <person name="Schwartz J.R."/>
            <person name="Shinn P."/>
            <person name="Southwick A.M."/>
            <person name="Sun H."/>
            <person name="Tallon L.J."/>
            <person name="Tambunga G."/>
            <person name="Toriumi M.J."/>
            <person name="Town C.D."/>
            <person name="Utterback T."/>
            <person name="Van Aken S."/>
            <person name="Vaysberg M."/>
            <person name="Vysotskaia V.S."/>
            <person name="Walker M."/>
            <person name="Wu D."/>
            <person name="Yu G."/>
            <person name="Fraser C.M."/>
            <person name="Venter J.C."/>
            <person name="Davis R.W."/>
        </authorList>
    </citation>
    <scope>NUCLEOTIDE SEQUENCE [LARGE SCALE GENOMIC DNA]</scope>
    <source>
        <strain>cv. Columbia</strain>
    </source>
</reference>
<reference key="2">
    <citation type="journal article" date="2017" name="Plant J.">
        <title>Araport11: a complete reannotation of the Arabidopsis thaliana reference genome.</title>
        <authorList>
            <person name="Cheng C.Y."/>
            <person name="Krishnakumar V."/>
            <person name="Chan A.P."/>
            <person name="Thibaud-Nissen F."/>
            <person name="Schobel S."/>
            <person name="Town C.D."/>
        </authorList>
    </citation>
    <scope>GENOME REANNOTATION</scope>
    <source>
        <strain>cv. Columbia</strain>
    </source>
</reference>
<reference key="3">
    <citation type="journal article" date="2004" name="Plant Cell">
        <title>Genome-wide analysis of Arabidopsis pentatricopeptide repeat proteins reveals their essential role in organelle biogenesis.</title>
        <authorList>
            <person name="Lurin C."/>
            <person name="Andres C."/>
            <person name="Aubourg S."/>
            <person name="Bellaoui M."/>
            <person name="Bitton F."/>
            <person name="Bruyere C."/>
            <person name="Caboche M."/>
            <person name="Debast C."/>
            <person name="Gualberto J."/>
            <person name="Hoffmann B."/>
            <person name="Lecharny A."/>
            <person name="Le Ret M."/>
            <person name="Martin-Magniette M.-L."/>
            <person name="Mireau H."/>
            <person name="Peeters N."/>
            <person name="Renou J.-P."/>
            <person name="Szurek B."/>
            <person name="Taconnat L."/>
            <person name="Small I."/>
        </authorList>
    </citation>
    <scope>GENE FAMILY</scope>
</reference>
<evidence type="ECO:0000305" key="1"/>
<proteinExistence type="inferred from homology"/>
<organism>
    <name type="scientific">Arabidopsis thaliana</name>
    <name type="common">Mouse-ear cress</name>
    <dbReference type="NCBI Taxonomy" id="3702"/>
    <lineage>
        <taxon>Eukaryota</taxon>
        <taxon>Viridiplantae</taxon>
        <taxon>Streptophyta</taxon>
        <taxon>Embryophyta</taxon>
        <taxon>Tracheophyta</taxon>
        <taxon>Spermatophyta</taxon>
        <taxon>Magnoliopsida</taxon>
        <taxon>eudicotyledons</taxon>
        <taxon>Gunneridae</taxon>
        <taxon>Pentapetalae</taxon>
        <taxon>rosids</taxon>
        <taxon>malvids</taxon>
        <taxon>Brassicales</taxon>
        <taxon>Brassicaceae</taxon>
        <taxon>Camelineae</taxon>
        <taxon>Arabidopsis</taxon>
    </lineage>
</organism>
<feature type="chain" id="PRO_0000342800" description="Putative pentatricopeptide repeat-containing protein At1g26500">
    <location>
        <begin position="1"/>
        <end position="505"/>
    </location>
</feature>
<feature type="repeat" description="PPR 1">
    <location>
        <begin position="145"/>
        <end position="179"/>
    </location>
</feature>
<feature type="repeat" description="PPR 2">
    <location>
        <begin position="180"/>
        <end position="210"/>
    </location>
</feature>
<feature type="repeat" description="PPR 3">
    <location>
        <begin position="214"/>
        <end position="248"/>
    </location>
</feature>
<feature type="repeat" description="PPR 4">
    <location>
        <begin position="249"/>
        <end position="279"/>
    </location>
</feature>
<feature type="repeat" description="PPR 5">
    <location>
        <begin position="285"/>
        <end position="319"/>
    </location>
</feature>
<feature type="repeat" description="PPR 6">
    <location>
        <begin position="320"/>
        <end position="350"/>
    </location>
</feature>
<feature type="repeat" description="PPR 7">
    <location>
        <begin position="351"/>
        <end position="385"/>
    </location>
</feature>
<keyword id="KW-1185">Reference proteome</keyword>
<keyword id="KW-0677">Repeat</keyword>